<evidence type="ECO:0000250" key="1"/>
<evidence type="ECO:0000250" key="2">
    <source>
        <dbReference type="UniProtKB" id="Q5PQV5"/>
    </source>
</evidence>
<evidence type="ECO:0000255" key="3"/>
<evidence type="ECO:0000256" key="4">
    <source>
        <dbReference type="SAM" id="MobiDB-lite"/>
    </source>
</evidence>
<evidence type="ECO:0000269" key="5">
    <source>
    </source>
</evidence>
<evidence type="ECO:0000269" key="6">
    <source>
    </source>
</evidence>
<evidence type="ECO:0000305" key="7"/>
<proteinExistence type="evidence at protein level"/>
<protein>
    <recommendedName>
        <fullName>Trophoblast glycoprotein</fullName>
    </recommendedName>
    <alternativeName>
        <fullName>5T4 oncofetal trophoblast glycoprotein</fullName>
        <shortName>5T4 oncotrophoblast glycoprotein</shortName>
    </alternativeName>
    <alternativeName>
        <fullName>Wnt-activated inhibitory factor 1</fullName>
        <shortName>WAIF1</shortName>
    </alternativeName>
</protein>
<comment type="function">
    <text evidence="1">May function as an inhibitor of Wnt/beta-catenin signaling by indirectly interacting with LRP6 and blocking Wnt3a-dependent LRP6 internalization.</text>
</comment>
<comment type="subcellular location">
    <subcellularLocation>
        <location evidence="1">Cell membrane</location>
        <topology evidence="1">Single-pass type I membrane protein</topology>
    </subcellularLocation>
</comment>
<comment type="tissue specificity">
    <text evidence="5">Highly expressed in embryo and placenta. In adult, expressed only in brain and ovary. Not detected in kidney small intestine, heart, spleen, testis, liver, lung, thymus and stomach.</text>
</comment>
<comment type="domain">
    <text evidence="1">The C-terminus of LRR N-terminal cap (LRRNT) and LRR 1 are essential for the inhibition of the Wnt signaling pathway.</text>
</comment>
<comment type="PTM">
    <text evidence="1">Highly glycosylated.</text>
</comment>
<sequence length="426" mass="46451">MPGAGSRGPSAGDGRLRLARLALVLLGWVSASAPSSSVPSSSTSPAAFLASGSAQPPPAERCPAACECSEAARTVKCVNRNLLEVPADLPPYVRNLFLTGNQMTVLPAGAFARQPPLADLEALNLSGNHLKEVCAGAFEHLPGLRRLDLSHNPLTNLSAFAFAGSNASVSAPSPLEELILNHIVPPEDQRQNGSFEGMVAFEGMVAAALRSGLALRGLTRLELASNHFLFLPRDLLAQLPSLRYLDLRNNSLVSLTYASFRNLTHLESLHLEDNALKVLHNSTLAEWHGLAHVKVFLDNNPWVCDCYMADMVAWLKETEVVPDKARLTCAFPEKMRNRGLLDLNSSDLDCDAVLPQSLQTSYVFLGIVLALIGAIFLLVLYLNRKGIKKWMHNIRDACRDHMEGYHYRYEINADPRLTNLSSNSDV</sequence>
<name>TPBG_MOUSE</name>
<dbReference type="EMBL" id="AJ012160">
    <property type="protein sequence ID" value="CAA09931.1"/>
    <property type="molecule type" value="Genomic_DNA"/>
</dbReference>
<dbReference type="EMBL" id="AK051162">
    <property type="protein sequence ID" value="BAC34540.1"/>
    <property type="molecule type" value="mRNA"/>
</dbReference>
<dbReference type="EMBL" id="AK143519">
    <property type="protein sequence ID" value="BAE25413.1"/>
    <property type="molecule type" value="mRNA"/>
</dbReference>
<dbReference type="EMBL" id="BC058198">
    <property type="protein sequence ID" value="AAH58198.1"/>
    <property type="molecule type" value="mRNA"/>
</dbReference>
<dbReference type="CCDS" id="CCDS23380.1"/>
<dbReference type="RefSeq" id="NP_001158264.1">
    <property type="nucleotide sequence ID" value="NM_001164792.2"/>
</dbReference>
<dbReference type="RefSeq" id="NP_035757.2">
    <property type="nucleotide sequence ID" value="NM_011627.4"/>
</dbReference>
<dbReference type="RefSeq" id="XP_017168769.1">
    <property type="nucleotide sequence ID" value="XM_017313280.2"/>
</dbReference>
<dbReference type="RefSeq" id="XP_017168770.1">
    <property type="nucleotide sequence ID" value="XM_017313281.2"/>
</dbReference>
<dbReference type="RefSeq" id="XP_017168771.1">
    <property type="nucleotide sequence ID" value="XM_017313282.3"/>
</dbReference>
<dbReference type="SMR" id="Q9Z0L0"/>
<dbReference type="BioGRID" id="204285">
    <property type="interactions" value="3"/>
</dbReference>
<dbReference type="FunCoup" id="Q9Z0L0">
    <property type="interactions" value="851"/>
</dbReference>
<dbReference type="STRING" id="10090.ENSMUSP00000006559"/>
<dbReference type="GlyConnect" id="2801">
    <property type="glycosylation" value="6 N-Linked glycans (3 sites)"/>
</dbReference>
<dbReference type="GlyCosmos" id="Q9Z0L0">
    <property type="glycosylation" value="4 sites, 6 glycans"/>
</dbReference>
<dbReference type="GlyGen" id="Q9Z0L0">
    <property type="glycosylation" value="6 sites, 12 N-linked glycans (6 sites)"/>
</dbReference>
<dbReference type="iPTMnet" id="Q9Z0L0"/>
<dbReference type="PhosphoSitePlus" id="Q9Z0L0"/>
<dbReference type="SwissPalm" id="Q9Z0L0"/>
<dbReference type="PaxDb" id="10090-ENSMUSP00000006559"/>
<dbReference type="PeptideAtlas" id="Q9Z0L0"/>
<dbReference type="ProteomicsDB" id="258820"/>
<dbReference type="Pumba" id="Q9Z0L0"/>
<dbReference type="Antibodypedia" id="2135">
    <property type="antibodies" value="371 antibodies from 34 providers"/>
</dbReference>
<dbReference type="DNASU" id="21983"/>
<dbReference type="Ensembl" id="ENSMUST00000006559.14">
    <property type="protein sequence ID" value="ENSMUSP00000006559.8"/>
    <property type="gene ID" value="ENSMUSG00000035274.14"/>
</dbReference>
<dbReference type="Ensembl" id="ENSMUST00000098500.5">
    <property type="protein sequence ID" value="ENSMUSP00000096101.4"/>
    <property type="gene ID" value="ENSMUSG00000035274.14"/>
</dbReference>
<dbReference type="GeneID" id="21983"/>
<dbReference type="KEGG" id="mmu:21983"/>
<dbReference type="UCSC" id="uc009qwz.2">
    <property type="organism name" value="mouse"/>
</dbReference>
<dbReference type="AGR" id="MGI:1341264"/>
<dbReference type="CTD" id="7162"/>
<dbReference type="MGI" id="MGI:1341264">
    <property type="gene designation" value="Tpbg"/>
</dbReference>
<dbReference type="VEuPathDB" id="HostDB:ENSMUSG00000035274"/>
<dbReference type="eggNOG" id="KOG0619">
    <property type="taxonomic scope" value="Eukaryota"/>
</dbReference>
<dbReference type="GeneTree" id="ENSGT00940000154868"/>
<dbReference type="HOGENOM" id="CLU_064866_0_0_1"/>
<dbReference type="InParanoid" id="Q9Z0L0"/>
<dbReference type="OMA" id="FVKPSDM"/>
<dbReference type="OrthoDB" id="8861968at2759"/>
<dbReference type="PhylomeDB" id="Q9Z0L0"/>
<dbReference type="TreeFam" id="TF351115"/>
<dbReference type="BioGRID-ORCS" id="21983">
    <property type="hits" value="2 hits in 78 CRISPR screens"/>
</dbReference>
<dbReference type="ChiTaRS" id="Tpbg">
    <property type="organism name" value="mouse"/>
</dbReference>
<dbReference type="PRO" id="PR:Q9Z0L0"/>
<dbReference type="Proteomes" id="UP000000589">
    <property type="component" value="Chromosome 9"/>
</dbReference>
<dbReference type="RNAct" id="Q9Z0L0">
    <property type="molecule type" value="protein"/>
</dbReference>
<dbReference type="Bgee" id="ENSMUSG00000035274">
    <property type="expression patterns" value="Expressed in ureter smooth muscle and 211 other cell types or tissues"/>
</dbReference>
<dbReference type="GO" id="GO:0043679">
    <property type="term" value="C:axon terminus"/>
    <property type="evidence" value="ECO:0000314"/>
    <property type="project" value="MGI"/>
</dbReference>
<dbReference type="GO" id="GO:0005737">
    <property type="term" value="C:cytoplasm"/>
    <property type="evidence" value="ECO:0000314"/>
    <property type="project" value="MGI"/>
</dbReference>
<dbReference type="GO" id="GO:0030425">
    <property type="term" value="C:dendrite"/>
    <property type="evidence" value="ECO:0000314"/>
    <property type="project" value="MGI"/>
</dbReference>
<dbReference type="GO" id="GO:0005783">
    <property type="term" value="C:endoplasmic reticulum"/>
    <property type="evidence" value="ECO:0000314"/>
    <property type="project" value="MGI"/>
</dbReference>
<dbReference type="GO" id="GO:0005886">
    <property type="term" value="C:plasma membrane"/>
    <property type="evidence" value="ECO:0000314"/>
    <property type="project" value="MGI"/>
</dbReference>
<dbReference type="GO" id="GO:0060326">
    <property type="term" value="P:cell chemotaxis"/>
    <property type="evidence" value="ECO:0000315"/>
    <property type="project" value="MGI"/>
</dbReference>
<dbReference type="GO" id="GO:0140059">
    <property type="term" value="P:dendrite arborization"/>
    <property type="evidence" value="ECO:0000315"/>
    <property type="project" value="MGI"/>
</dbReference>
<dbReference type="GO" id="GO:0090497">
    <property type="term" value="P:mesenchymal cell migration"/>
    <property type="evidence" value="ECO:0000315"/>
    <property type="project" value="MGI"/>
</dbReference>
<dbReference type="GO" id="GO:0008285">
    <property type="term" value="P:negative regulation of cell population proliferation"/>
    <property type="evidence" value="ECO:0000316"/>
    <property type="project" value="MGI"/>
</dbReference>
<dbReference type="GO" id="GO:0008355">
    <property type="term" value="P:olfactory learning"/>
    <property type="evidence" value="ECO:0000315"/>
    <property type="project" value="MGI"/>
</dbReference>
<dbReference type="GO" id="GO:0050921">
    <property type="term" value="P:positive regulation of chemotaxis"/>
    <property type="evidence" value="ECO:0000316"/>
    <property type="project" value="MGI"/>
</dbReference>
<dbReference type="GO" id="GO:0070374">
    <property type="term" value="P:positive regulation of ERK1 and ERK2 cascade"/>
    <property type="evidence" value="ECO:0000316"/>
    <property type="project" value="MGI"/>
</dbReference>
<dbReference type="GO" id="GO:0051897">
    <property type="term" value="P:positive regulation of phosphatidylinositol 3-kinase/protein kinase B signal transduction"/>
    <property type="evidence" value="ECO:0000316"/>
    <property type="project" value="MGI"/>
</dbReference>
<dbReference type="GO" id="GO:0051965">
    <property type="term" value="P:positive regulation of synapse assembly"/>
    <property type="evidence" value="ECO:0000314"/>
    <property type="project" value="MGI"/>
</dbReference>
<dbReference type="GO" id="GO:0072659">
    <property type="term" value="P:protein localization to plasma membrane"/>
    <property type="evidence" value="ECO:0000315"/>
    <property type="project" value="MGI"/>
</dbReference>
<dbReference type="GO" id="GO:0051932">
    <property type="term" value="P:synaptic transmission, GABAergic"/>
    <property type="evidence" value="ECO:0000315"/>
    <property type="project" value="MGI"/>
</dbReference>
<dbReference type="FunFam" id="3.80.10.10:FF:000745">
    <property type="entry name" value="Trophoblast glycoprotein"/>
    <property type="match status" value="1"/>
</dbReference>
<dbReference type="Gene3D" id="3.80.10.10">
    <property type="entry name" value="Ribonuclease Inhibitor"/>
    <property type="match status" value="1"/>
</dbReference>
<dbReference type="InterPro" id="IPR000483">
    <property type="entry name" value="Cys-rich_flank_reg_C"/>
</dbReference>
<dbReference type="InterPro" id="IPR001611">
    <property type="entry name" value="Leu-rich_rpt"/>
</dbReference>
<dbReference type="InterPro" id="IPR003591">
    <property type="entry name" value="Leu-rich_rpt_typical-subtyp"/>
</dbReference>
<dbReference type="InterPro" id="IPR032675">
    <property type="entry name" value="LRR_dom_sf"/>
</dbReference>
<dbReference type="InterPro" id="IPR000372">
    <property type="entry name" value="LRRNT"/>
</dbReference>
<dbReference type="InterPro" id="IPR052286">
    <property type="entry name" value="Wnt_signaling_inhibitor"/>
</dbReference>
<dbReference type="PANTHER" id="PTHR24364">
    <property type="entry name" value="LP06937P"/>
    <property type="match status" value="1"/>
</dbReference>
<dbReference type="PANTHER" id="PTHR24364:SF17">
    <property type="entry name" value="TROPHOBLAST GLYCOPROTEIN"/>
    <property type="match status" value="1"/>
</dbReference>
<dbReference type="Pfam" id="PF13855">
    <property type="entry name" value="LRR_8"/>
    <property type="match status" value="2"/>
</dbReference>
<dbReference type="Pfam" id="PF01462">
    <property type="entry name" value="LRRNT"/>
    <property type="match status" value="1"/>
</dbReference>
<dbReference type="PRINTS" id="PR00019">
    <property type="entry name" value="LEURICHRPT"/>
</dbReference>
<dbReference type="SMART" id="SM00364">
    <property type="entry name" value="LRR_BAC"/>
    <property type="match status" value="4"/>
</dbReference>
<dbReference type="SMART" id="SM00369">
    <property type="entry name" value="LRR_TYP"/>
    <property type="match status" value="6"/>
</dbReference>
<dbReference type="SMART" id="SM00082">
    <property type="entry name" value="LRRCT"/>
    <property type="match status" value="1"/>
</dbReference>
<dbReference type="SMART" id="SM00013">
    <property type="entry name" value="LRRNT"/>
    <property type="match status" value="1"/>
</dbReference>
<dbReference type="SUPFAM" id="SSF52058">
    <property type="entry name" value="L domain-like"/>
    <property type="match status" value="1"/>
</dbReference>
<dbReference type="PROSITE" id="PS51450">
    <property type="entry name" value="LRR"/>
    <property type="match status" value="4"/>
</dbReference>
<organism>
    <name type="scientific">Mus musculus</name>
    <name type="common">Mouse</name>
    <dbReference type="NCBI Taxonomy" id="10090"/>
    <lineage>
        <taxon>Eukaryota</taxon>
        <taxon>Metazoa</taxon>
        <taxon>Chordata</taxon>
        <taxon>Craniata</taxon>
        <taxon>Vertebrata</taxon>
        <taxon>Euteleostomi</taxon>
        <taxon>Mammalia</taxon>
        <taxon>Eutheria</taxon>
        <taxon>Euarchontoglires</taxon>
        <taxon>Glires</taxon>
        <taxon>Rodentia</taxon>
        <taxon>Myomorpha</taxon>
        <taxon>Muroidea</taxon>
        <taxon>Muridae</taxon>
        <taxon>Murinae</taxon>
        <taxon>Mus</taxon>
        <taxon>Mus</taxon>
    </lineage>
</organism>
<feature type="signal peptide" evidence="3">
    <location>
        <begin position="1"/>
        <end position="31"/>
    </location>
</feature>
<feature type="chain" id="PRO_0000019593" description="Trophoblast glycoprotein">
    <location>
        <begin position="32"/>
        <end position="426"/>
    </location>
</feature>
<feature type="topological domain" description="Extracellular" evidence="3">
    <location>
        <begin position="32"/>
        <end position="361"/>
    </location>
</feature>
<feature type="transmembrane region" description="Helical" evidence="3">
    <location>
        <begin position="362"/>
        <end position="382"/>
    </location>
</feature>
<feature type="topological domain" description="Cytoplasmic" evidence="3">
    <location>
        <begin position="383"/>
        <end position="426"/>
    </location>
</feature>
<feature type="domain" description="LRRNT">
    <location>
        <begin position="53"/>
        <end position="91"/>
    </location>
</feature>
<feature type="repeat" description="LRR 1">
    <location>
        <begin position="92"/>
        <end position="113"/>
    </location>
</feature>
<feature type="repeat" description="LRR 2">
    <location>
        <begin position="116"/>
        <end position="139"/>
    </location>
</feature>
<feature type="repeat" description="LRR 3">
    <location>
        <begin position="141"/>
        <end position="163"/>
    </location>
</feature>
<feature type="repeat" description="LRR 4">
    <location>
        <begin position="172"/>
        <end position="210"/>
    </location>
</feature>
<feature type="repeat" description="LRR 5">
    <location>
        <begin position="215"/>
        <end position="238"/>
    </location>
</feature>
<feature type="repeat" description="LRR 6">
    <location>
        <begin position="239"/>
        <end position="261"/>
    </location>
</feature>
<feature type="repeat" description="LRR 7">
    <location>
        <begin position="262"/>
        <end position="281"/>
    </location>
</feature>
<feature type="domain" description="LRRCT">
    <location>
        <begin position="289"/>
        <end position="352"/>
    </location>
</feature>
<feature type="region of interest" description="Disordered" evidence="4">
    <location>
        <begin position="33"/>
        <end position="53"/>
    </location>
</feature>
<feature type="compositionally biased region" description="Low complexity" evidence="4">
    <location>
        <begin position="33"/>
        <end position="47"/>
    </location>
</feature>
<feature type="modified residue" description="Phosphoserine" evidence="2">
    <location>
        <position position="424"/>
    </location>
</feature>
<feature type="glycosylation site" description="N-linked (GlcNAc...) asparagine" evidence="3">
    <location>
        <position position="124"/>
    </location>
</feature>
<feature type="glycosylation site" description="N-linked (GlcNAc...) asparagine" evidence="6">
    <location>
        <position position="281"/>
    </location>
</feature>
<feature type="disulfide bond" evidence="1">
    <location>
        <begin position="62"/>
        <end position="68"/>
    </location>
</feature>
<feature type="disulfide bond" evidence="1">
    <location>
        <begin position="66"/>
        <end position="77"/>
    </location>
</feature>
<feature type="disulfide bond" evidence="1">
    <location>
        <begin position="304"/>
        <end position="329"/>
    </location>
</feature>
<feature type="disulfide bond" evidence="1">
    <location>
        <begin position="306"/>
        <end position="350"/>
    </location>
</feature>
<feature type="sequence conflict" description="In Ref. 1; CAA09931." evidence="7" ref="1">
    <original>A</original>
    <variation>D</variation>
    <location>
        <position position="47"/>
    </location>
</feature>
<feature type="sequence conflict" description="In Ref. 1; CAA09931." evidence="7" ref="1">
    <original>A</original>
    <variation>V</variation>
    <location>
        <position position="161"/>
    </location>
</feature>
<feature type="sequence conflict" description="In Ref. 3; AAH58198." evidence="7" ref="3">
    <original>R</original>
    <variation>C</variation>
    <location>
        <position position="220"/>
    </location>
</feature>
<feature type="sequence conflict" description="In Ref. 1; CAA09931 and 3; AAH58198." evidence="7" ref="1 3">
    <original>H</original>
    <variation>Q</variation>
    <location>
        <position position="288"/>
    </location>
</feature>
<reference key="1">
    <citation type="journal article" date="1999" name="Biochim. Biophys. Acta">
        <title>Organisation of the mouse and human 5T4 oncofetal leucine-rich glycoprotein gene and expression in foetal and adult murine tissues.</title>
        <authorList>
            <person name="King K.W."/>
            <person name="Sheppard F.C."/>
            <person name="Westwater C."/>
            <person name="Stern P.L."/>
            <person name="Myers K.A."/>
        </authorList>
    </citation>
    <scope>NUCLEOTIDE SEQUENCE [GENOMIC DNA]</scope>
    <scope>TISSUE SPECIFICITY</scope>
    <source>
        <strain>129/Sv</strain>
    </source>
</reference>
<reference key="2">
    <citation type="journal article" date="2005" name="Science">
        <title>The transcriptional landscape of the mammalian genome.</title>
        <authorList>
            <person name="Carninci P."/>
            <person name="Kasukawa T."/>
            <person name="Katayama S."/>
            <person name="Gough J."/>
            <person name="Frith M.C."/>
            <person name="Maeda N."/>
            <person name="Oyama R."/>
            <person name="Ravasi T."/>
            <person name="Lenhard B."/>
            <person name="Wells C."/>
            <person name="Kodzius R."/>
            <person name="Shimokawa K."/>
            <person name="Bajic V.B."/>
            <person name="Brenner S.E."/>
            <person name="Batalov S."/>
            <person name="Forrest A.R."/>
            <person name="Zavolan M."/>
            <person name="Davis M.J."/>
            <person name="Wilming L.G."/>
            <person name="Aidinis V."/>
            <person name="Allen J.E."/>
            <person name="Ambesi-Impiombato A."/>
            <person name="Apweiler R."/>
            <person name="Aturaliya R.N."/>
            <person name="Bailey T.L."/>
            <person name="Bansal M."/>
            <person name="Baxter L."/>
            <person name="Beisel K.W."/>
            <person name="Bersano T."/>
            <person name="Bono H."/>
            <person name="Chalk A.M."/>
            <person name="Chiu K.P."/>
            <person name="Choudhary V."/>
            <person name="Christoffels A."/>
            <person name="Clutterbuck D.R."/>
            <person name="Crowe M.L."/>
            <person name="Dalla E."/>
            <person name="Dalrymple B.P."/>
            <person name="de Bono B."/>
            <person name="Della Gatta G."/>
            <person name="di Bernardo D."/>
            <person name="Down T."/>
            <person name="Engstrom P."/>
            <person name="Fagiolini M."/>
            <person name="Faulkner G."/>
            <person name="Fletcher C.F."/>
            <person name="Fukushima T."/>
            <person name="Furuno M."/>
            <person name="Futaki S."/>
            <person name="Gariboldi M."/>
            <person name="Georgii-Hemming P."/>
            <person name="Gingeras T.R."/>
            <person name="Gojobori T."/>
            <person name="Green R.E."/>
            <person name="Gustincich S."/>
            <person name="Harbers M."/>
            <person name="Hayashi Y."/>
            <person name="Hensch T.K."/>
            <person name="Hirokawa N."/>
            <person name="Hill D."/>
            <person name="Huminiecki L."/>
            <person name="Iacono M."/>
            <person name="Ikeo K."/>
            <person name="Iwama A."/>
            <person name="Ishikawa T."/>
            <person name="Jakt M."/>
            <person name="Kanapin A."/>
            <person name="Katoh M."/>
            <person name="Kawasawa Y."/>
            <person name="Kelso J."/>
            <person name="Kitamura H."/>
            <person name="Kitano H."/>
            <person name="Kollias G."/>
            <person name="Krishnan S.P."/>
            <person name="Kruger A."/>
            <person name="Kummerfeld S.K."/>
            <person name="Kurochkin I.V."/>
            <person name="Lareau L.F."/>
            <person name="Lazarevic D."/>
            <person name="Lipovich L."/>
            <person name="Liu J."/>
            <person name="Liuni S."/>
            <person name="McWilliam S."/>
            <person name="Madan Babu M."/>
            <person name="Madera M."/>
            <person name="Marchionni L."/>
            <person name="Matsuda H."/>
            <person name="Matsuzawa S."/>
            <person name="Miki H."/>
            <person name="Mignone F."/>
            <person name="Miyake S."/>
            <person name="Morris K."/>
            <person name="Mottagui-Tabar S."/>
            <person name="Mulder N."/>
            <person name="Nakano N."/>
            <person name="Nakauchi H."/>
            <person name="Ng P."/>
            <person name="Nilsson R."/>
            <person name="Nishiguchi S."/>
            <person name="Nishikawa S."/>
            <person name="Nori F."/>
            <person name="Ohara O."/>
            <person name="Okazaki Y."/>
            <person name="Orlando V."/>
            <person name="Pang K.C."/>
            <person name="Pavan W.J."/>
            <person name="Pavesi G."/>
            <person name="Pesole G."/>
            <person name="Petrovsky N."/>
            <person name="Piazza S."/>
            <person name="Reed J."/>
            <person name="Reid J.F."/>
            <person name="Ring B.Z."/>
            <person name="Ringwald M."/>
            <person name="Rost B."/>
            <person name="Ruan Y."/>
            <person name="Salzberg S.L."/>
            <person name="Sandelin A."/>
            <person name="Schneider C."/>
            <person name="Schoenbach C."/>
            <person name="Sekiguchi K."/>
            <person name="Semple C.A."/>
            <person name="Seno S."/>
            <person name="Sessa L."/>
            <person name="Sheng Y."/>
            <person name="Shibata Y."/>
            <person name="Shimada H."/>
            <person name="Shimada K."/>
            <person name="Silva D."/>
            <person name="Sinclair B."/>
            <person name="Sperling S."/>
            <person name="Stupka E."/>
            <person name="Sugiura K."/>
            <person name="Sultana R."/>
            <person name="Takenaka Y."/>
            <person name="Taki K."/>
            <person name="Tammoja K."/>
            <person name="Tan S.L."/>
            <person name="Tang S."/>
            <person name="Taylor M.S."/>
            <person name="Tegner J."/>
            <person name="Teichmann S.A."/>
            <person name="Ueda H.R."/>
            <person name="van Nimwegen E."/>
            <person name="Verardo R."/>
            <person name="Wei C.L."/>
            <person name="Yagi K."/>
            <person name="Yamanishi H."/>
            <person name="Zabarovsky E."/>
            <person name="Zhu S."/>
            <person name="Zimmer A."/>
            <person name="Hide W."/>
            <person name="Bult C."/>
            <person name="Grimmond S.M."/>
            <person name="Teasdale R.D."/>
            <person name="Liu E.T."/>
            <person name="Brusic V."/>
            <person name="Quackenbush J."/>
            <person name="Wahlestedt C."/>
            <person name="Mattick J.S."/>
            <person name="Hume D.A."/>
            <person name="Kai C."/>
            <person name="Sasaki D."/>
            <person name="Tomaru Y."/>
            <person name="Fukuda S."/>
            <person name="Kanamori-Katayama M."/>
            <person name="Suzuki M."/>
            <person name="Aoki J."/>
            <person name="Arakawa T."/>
            <person name="Iida J."/>
            <person name="Imamura K."/>
            <person name="Itoh M."/>
            <person name="Kato T."/>
            <person name="Kawaji H."/>
            <person name="Kawagashira N."/>
            <person name="Kawashima T."/>
            <person name="Kojima M."/>
            <person name="Kondo S."/>
            <person name="Konno H."/>
            <person name="Nakano K."/>
            <person name="Ninomiya N."/>
            <person name="Nishio T."/>
            <person name="Okada M."/>
            <person name="Plessy C."/>
            <person name="Shibata K."/>
            <person name="Shiraki T."/>
            <person name="Suzuki S."/>
            <person name="Tagami M."/>
            <person name="Waki K."/>
            <person name="Watahiki A."/>
            <person name="Okamura-Oho Y."/>
            <person name="Suzuki H."/>
            <person name="Kawai J."/>
            <person name="Hayashizaki Y."/>
        </authorList>
    </citation>
    <scope>NUCLEOTIDE SEQUENCE [LARGE SCALE MRNA]</scope>
    <source>
        <strain>C57BL/6J</strain>
        <tissue>Spinal ganglion</tissue>
    </source>
</reference>
<reference key="3">
    <citation type="journal article" date="2004" name="Genome Res.">
        <title>The status, quality, and expansion of the NIH full-length cDNA project: the Mammalian Gene Collection (MGC).</title>
        <authorList>
            <consortium name="The MGC Project Team"/>
        </authorList>
    </citation>
    <scope>NUCLEOTIDE SEQUENCE [LARGE SCALE MRNA]</scope>
    <source>
        <strain>FVB/N</strain>
        <tissue>Mammary gland</tissue>
    </source>
</reference>
<reference key="4">
    <citation type="journal article" date="2009" name="Nat. Biotechnol.">
        <title>Mass-spectrometric identification and relative quantification of N-linked cell surface glycoproteins.</title>
        <authorList>
            <person name="Wollscheid B."/>
            <person name="Bausch-Fluck D."/>
            <person name="Henderson C."/>
            <person name="O'Brien R."/>
            <person name="Bibel M."/>
            <person name="Schiess R."/>
            <person name="Aebersold R."/>
            <person name="Watts J.D."/>
        </authorList>
    </citation>
    <scope>GLYCOSYLATION [LARGE SCALE ANALYSIS] AT ASN-281</scope>
</reference>
<keyword id="KW-1003">Cell membrane</keyword>
<keyword id="KW-1015">Disulfide bond</keyword>
<keyword id="KW-0325">Glycoprotein</keyword>
<keyword id="KW-0433">Leucine-rich repeat</keyword>
<keyword id="KW-0472">Membrane</keyword>
<keyword id="KW-0597">Phosphoprotein</keyword>
<keyword id="KW-1185">Reference proteome</keyword>
<keyword id="KW-0677">Repeat</keyword>
<keyword id="KW-0732">Signal</keyword>
<keyword id="KW-0812">Transmembrane</keyword>
<keyword id="KW-1133">Transmembrane helix</keyword>
<accession>Q9Z0L0</accession>
<accession>Q3UPI2</accession>
<accession>Q6PE98</accession>
<accession>Q8BQA4</accession>
<gene>
    <name type="primary">Tpbg</name>
    <name type="synonym">5t4</name>
</gene>